<reference key="1">
    <citation type="journal article" date="2008" name="J. Bacteriol.">
        <title>Genome sequence of Thermofilum pendens reveals an exceptional loss of biosynthetic pathways without genome reduction.</title>
        <authorList>
            <person name="Anderson I."/>
            <person name="Rodriguez J."/>
            <person name="Susanti D."/>
            <person name="Porat I."/>
            <person name="Reich C."/>
            <person name="Ulrich L.E."/>
            <person name="Elkins J.G."/>
            <person name="Mavromatis K."/>
            <person name="Lykidis A."/>
            <person name="Kim E."/>
            <person name="Thompson L.S."/>
            <person name="Nolan M."/>
            <person name="Land M."/>
            <person name="Copeland A."/>
            <person name="Lapidus A."/>
            <person name="Lucas S."/>
            <person name="Detter C."/>
            <person name="Zhulin I.B."/>
            <person name="Olsen G.J."/>
            <person name="Whitman W."/>
            <person name="Mukhopadhyay B."/>
            <person name="Bristow J."/>
            <person name="Kyrpides N."/>
        </authorList>
    </citation>
    <scope>NUCLEOTIDE SEQUENCE [LARGE SCALE GENOMIC DNA]</scope>
    <source>
        <strain>DSM 2475 / Hrk 5</strain>
    </source>
</reference>
<protein>
    <recommendedName>
        <fullName evidence="1">Translation initiation factor 2 subunit beta</fullName>
    </recommendedName>
    <alternativeName>
        <fullName evidence="1">aIF2-beta</fullName>
    </alternativeName>
    <alternativeName>
        <fullName evidence="1">eIF-2-beta</fullName>
    </alternativeName>
</protein>
<proteinExistence type="inferred from homology"/>
<organism>
    <name type="scientific">Thermofilum pendens (strain DSM 2475 / Hrk 5)</name>
    <dbReference type="NCBI Taxonomy" id="368408"/>
    <lineage>
        <taxon>Archaea</taxon>
        <taxon>Thermoproteota</taxon>
        <taxon>Thermoprotei</taxon>
        <taxon>Thermofilales</taxon>
        <taxon>Thermofilaceae</taxon>
        <taxon>Thermofilum</taxon>
    </lineage>
</organism>
<evidence type="ECO:0000255" key="1">
    <source>
        <dbReference type="HAMAP-Rule" id="MF_00232"/>
    </source>
</evidence>
<gene>
    <name evidence="1" type="primary">eif2b</name>
    <name type="ordered locus">Tpen_0380</name>
</gene>
<feature type="chain" id="PRO_0000336760" description="Translation initiation factor 2 subunit beta">
    <location>
        <begin position="1"/>
        <end position="141"/>
    </location>
</feature>
<accession>A1RX59</accession>
<comment type="function">
    <text evidence="1">eIF-2 functions in the early steps of protein synthesis by forming a ternary complex with GTP and initiator tRNA.</text>
</comment>
<comment type="subunit">
    <text evidence="1">Heterotrimer composed of an alpha, a beta and a gamma chain.</text>
</comment>
<comment type="similarity">
    <text evidence="1">Belongs to the eIF-2-beta/eIF-5 family.</text>
</comment>
<keyword id="KW-0396">Initiation factor</keyword>
<keyword id="KW-0648">Protein biosynthesis</keyword>
<keyword id="KW-1185">Reference proteome</keyword>
<dbReference type="EMBL" id="CP000505">
    <property type="protein sequence ID" value="ABL77789.1"/>
    <property type="molecule type" value="Genomic_DNA"/>
</dbReference>
<dbReference type="RefSeq" id="WP_011752054.1">
    <property type="nucleotide sequence ID" value="NC_008698.1"/>
</dbReference>
<dbReference type="SMR" id="A1RX59"/>
<dbReference type="STRING" id="368408.Tpen_0380"/>
<dbReference type="EnsemblBacteria" id="ABL77789">
    <property type="protein sequence ID" value="ABL77789"/>
    <property type="gene ID" value="Tpen_0380"/>
</dbReference>
<dbReference type="GeneID" id="4602148"/>
<dbReference type="KEGG" id="tpe:Tpen_0380"/>
<dbReference type="eggNOG" id="arCOG01640">
    <property type="taxonomic scope" value="Archaea"/>
</dbReference>
<dbReference type="HOGENOM" id="CLU_026663_3_1_2"/>
<dbReference type="OrthoDB" id="38099at2157"/>
<dbReference type="Proteomes" id="UP000000641">
    <property type="component" value="Chromosome"/>
</dbReference>
<dbReference type="GO" id="GO:0003743">
    <property type="term" value="F:translation initiation factor activity"/>
    <property type="evidence" value="ECO:0007669"/>
    <property type="project" value="UniProtKB-UniRule"/>
</dbReference>
<dbReference type="Gene3D" id="3.30.30.170">
    <property type="match status" value="1"/>
</dbReference>
<dbReference type="HAMAP" id="MF_00232">
    <property type="entry name" value="eIF_2_beta"/>
    <property type="match status" value="1"/>
</dbReference>
<dbReference type="InterPro" id="IPR045196">
    <property type="entry name" value="IF2/IF5"/>
</dbReference>
<dbReference type="InterPro" id="IPR004458">
    <property type="entry name" value="TIF2_bsu_arc"/>
</dbReference>
<dbReference type="InterPro" id="IPR002735">
    <property type="entry name" value="Transl_init_fac_IF2/IF5_dom"/>
</dbReference>
<dbReference type="InterPro" id="IPR016189">
    <property type="entry name" value="Transl_init_fac_IF2/IF5_N"/>
</dbReference>
<dbReference type="InterPro" id="IPR016190">
    <property type="entry name" value="Transl_init_fac_IF2/IF5_Zn-bd"/>
</dbReference>
<dbReference type="NCBIfam" id="NF003067">
    <property type="entry name" value="PRK03988.1"/>
    <property type="match status" value="1"/>
</dbReference>
<dbReference type="PANTHER" id="PTHR23001">
    <property type="entry name" value="EUKARYOTIC TRANSLATION INITIATION FACTOR"/>
    <property type="match status" value="1"/>
</dbReference>
<dbReference type="PANTHER" id="PTHR23001:SF3">
    <property type="entry name" value="EUKARYOTIC TRANSLATION INITIATION FACTOR 2 SUBUNIT 2"/>
    <property type="match status" value="1"/>
</dbReference>
<dbReference type="Pfam" id="PF01873">
    <property type="entry name" value="eIF-5_eIF-2B"/>
    <property type="match status" value="1"/>
</dbReference>
<dbReference type="SMART" id="SM00653">
    <property type="entry name" value="eIF2B_5"/>
    <property type="match status" value="1"/>
</dbReference>
<dbReference type="SUPFAM" id="SSF100966">
    <property type="entry name" value="Translation initiation factor 2 beta, aIF2beta, N-terminal domain"/>
    <property type="match status" value="1"/>
</dbReference>
<dbReference type="SUPFAM" id="SSF75689">
    <property type="entry name" value="Zinc-binding domain of translation initiation factor 2 beta"/>
    <property type="match status" value="1"/>
</dbReference>
<sequence>MTQAFMSYEELLERAYSMLPRRRRRSTGERFVLPTFEVSKTGKKVYIHNFKDVAEKLNREPPVLLRFILKEIALPGVYENGTAVIHGEVSAQTLNKLLERFYNEYVKCPVCEAPDTILVKEKKLMYIKCTACGAVSPVKPF</sequence>
<name>IF2B_THEPD</name>